<sequence length="249" mass="27558">MNSEFSLAYGNVDSDYALDLLERLDSNWKGTELFTHIRETFQIGLGNVIIVSEQSESLRIPPSLLGSSSPADSDNSPPGTPTNEAQPWFISEDLSKGPFTEAQSTQSSIETLEGEHHAVSSLHLKLNGLSCIGRAVWRATRKMDTRTEVDDILNSITEPRRLTLPGINKMRQCIVRLLLLVPIQVREEILSFAIASGIPSETIEDIRSSTNISAVDTNGRGIAHNSKKRSLAPTQDSRNLRRRIRGHTQ</sequence>
<dbReference type="EMBL" id="M18274">
    <property type="protein sequence ID" value="AAA35282.1"/>
    <property type="molecule type" value="Genomic_DNA"/>
</dbReference>
<dbReference type="RefSeq" id="NP_040497.1">
    <property type="nucleotide sequence ID" value="NC_002055.1"/>
</dbReference>
<dbReference type="SMR" id="P13780"/>
<dbReference type="GO" id="GO:0030541">
    <property type="term" value="P:plasmid partitioning"/>
    <property type="evidence" value="ECO:0007669"/>
    <property type="project" value="UniProtKB-KW"/>
</dbReference>
<reference key="1">
    <citation type="journal article" date="1987" name="J. Bacteriol.">
        <title>Yeast plasmids resembling 2 micron DNA: regional similarities and diversities at the molecular level.</title>
        <authorList>
            <person name="Utatsu I."/>
            <person name="Sakamoto S."/>
            <person name="Imura T."/>
            <person name="Toh-e A."/>
        </authorList>
    </citation>
    <scope>NUCLEOTIDE SEQUENCE [GENOMIC DNA]</scope>
    <source>
        <strain>ATCC 56075 / NBRC 1047 / NCTC 6969 / NCYC 128 / CBS 12809</strain>
    </source>
</reference>
<organism>
    <name type="scientific">Zygosaccharomyces bailii</name>
    <dbReference type="NCBI Taxonomy" id="4954"/>
    <lineage>
        <taxon>Eukaryota</taxon>
        <taxon>Fungi</taxon>
        <taxon>Dikarya</taxon>
        <taxon>Ascomycota</taxon>
        <taxon>Saccharomycotina</taxon>
        <taxon>Saccharomycetes</taxon>
        <taxon>Saccharomycetales</taxon>
        <taxon>Saccharomycetaceae</taxon>
        <taxon>Zygosaccharomyces</taxon>
    </lineage>
</organism>
<evidence type="ECO:0000256" key="1">
    <source>
        <dbReference type="SAM" id="MobiDB-lite"/>
    </source>
</evidence>
<geneLocation type="plasmid">
    <name>pSB2</name>
</geneLocation>
<feature type="chain" id="PRO_0000150900" description="Trans-acting factor C">
    <location>
        <begin position="1"/>
        <end position="249"/>
    </location>
</feature>
<feature type="region of interest" description="Disordered" evidence="1">
    <location>
        <begin position="61"/>
        <end position="86"/>
    </location>
</feature>
<feature type="region of interest" description="Disordered" evidence="1">
    <location>
        <begin position="217"/>
        <end position="249"/>
    </location>
</feature>
<feature type="compositionally biased region" description="Low complexity" evidence="1">
    <location>
        <begin position="67"/>
        <end position="77"/>
    </location>
</feature>
<feature type="compositionally biased region" description="Basic residues" evidence="1">
    <location>
        <begin position="240"/>
        <end position="249"/>
    </location>
</feature>
<accession>P13780</accession>
<protein>
    <recommendedName>
        <fullName>Trans-acting factor C</fullName>
    </recommendedName>
    <alternativeName>
        <fullName>REP2</fullName>
    </alternativeName>
</protein>
<proteinExistence type="predicted"/>
<name>REP2_ZYGBA</name>
<comment type="function">
    <text>Plasmid partition require REP1, REP2, and a cis-acting DNA sequence (known as STB).</text>
</comment>
<gene>
    <name type="primary">C</name>
</gene>
<keyword id="KW-0614">Plasmid</keyword>
<keyword id="KW-0616">Plasmid partition</keyword>